<proteinExistence type="inferred from homology"/>
<gene>
    <name evidence="1" type="primary">rps10</name>
    <name type="ordered locus">YN1551_0924</name>
</gene>
<organism>
    <name type="scientific">Saccharolobus islandicus (strain Y.N.15.51 / Yellowstone #2)</name>
    <name type="common">Sulfolobus islandicus</name>
    <dbReference type="NCBI Taxonomy" id="419942"/>
    <lineage>
        <taxon>Archaea</taxon>
        <taxon>Thermoproteota</taxon>
        <taxon>Thermoprotei</taxon>
        <taxon>Sulfolobales</taxon>
        <taxon>Sulfolobaceae</taxon>
        <taxon>Saccharolobus</taxon>
    </lineage>
</organism>
<dbReference type="EMBL" id="CP001404">
    <property type="protein sequence ID" value="ACP48033.1"/>
    <property type="molecule type" value="Genomic_DNA"/>
</dbReference>
<dbReference type="SMR" id="C3NFR5"/>
<dbReference type="KEGG" id="sin:YN1551_0924"/>
<dbReference type="HOGENOM" id="CLU_122625_0_1_2"/>
<dbReference type="Proteomes" id="UP000006818">
    <property type="component" value="Chromosome"/>
</dbReference>
<dbReference type="GO" id="GO:0015935">
    <property type="term" value="C:small ribosomal subunit"/>
    <property type="evidence" value="ECO:0007669"/>
    <property type="project" value="InterPro"/>
</dbReference>
<dbReference type="GO" id="GO:0003735">
    <property type="term" value="F:structural constituent of ribosome"/>
    <property type="evidence" value="ECO:0007669"/>
    <property type="project" value="InterPro"/>
</dbReference>
<dbReference type="GO" id="GO:0000049">
    <property type="term" value="F:tRNA binding"/>
    <property type="evidence" value="ECO:0007669"/>
    <property type="project" value="UniProtKB-UniRule"/>
</dbReference>
<dbReference type="GO" id="GO:0006412">
    <property type="term" value="P:translation"/>
    <property type="evidence" value="ECO:0007669"/>
    <property type="project" value="UniProtKB-UniRule"/>
</dbReference>
<dbReference type="FunFam" id="3.30.70.600:FF:000004">
    <property type="entry name" value="30S ribosomal protein S10"/>
    <property type="match status" value="1"/>
</dbReference>
<dbReference type="Gene3D" id="3.30.70.600">
    <property type="entry name" value="Ribosomal protein S10 domain"/>
    <property type="match status" value="1"/>
</dbReference>
<dbReference type="HAMAP" id="MF_00508">
    <property type="entry name" value="Ribosomal_uS10"/>
    <property type="match status" value="1"/>
</dbReference>
<dbReference type="InterPro" id="IPR001848">
    <property type="entry name" value="Ribosomal_uS10"/>
</dbReference>
<dbReference type="InterPro" id="IPR018268">
    <property type="entry name" value="Ribosomal_uS10_CS"/>
</dbReference>
<dbReference type="InterPro" id="IPR027486">
    <property type="entry name" value="Ribosomal_uS10_dom"/>
</dbReference>
<dbReference type="InterPro" id="IPR036838">
    <property type="entry name" value="Ribosomal_uS10_dom_sf"/>
</dbReference>
<dbReference type="InterPro" id="IPR005729">
    <property type="entry name" value="Ribosomal_uS10_euk/arc"/>
</dbReference>
<dbReference type="NCBIfam" id="TIGR01046">
    <property type="entry name" value="uS10_euk_arch"/>
    <property type="match status" value="1"/>
</dbReference>
<dbReference type="PANTHER" id="PTHR11700">
    <property type="entry name" value="30S RIBOSOMAL PROTEIN S10 FAMILY MEMBER"/>
    <property type="match status" value="1"/>
</dbReference>
<dbReference type="Pfam" id="PF00338">
    <property type="entry name" value="Ribosomal_S10"/>
    <property type="match status" value="1"/>
</dbReference>
<dbReference type="PRINTS" id="PR00971">
    <property type="entry name" value="RIBOSOMALS10"/>
</dbReference>
<dbReference type="SMART" id="SM01403">
    <property type="entry name" value="Ribosomal_S10"/>
    <property type="match status" value="1"/>
</dbReference>
<dbReference type="SUPFAM" id="SSF54999">
    <property type="entry name" value="Ribosomal protein S10"/>
    <property type="match status" value="1"/>
</dbReference>
<dbReference type="PROSITE" id="PS00361">
    <property type="entry name" value="RIBOSOMAL_S10"/>
    <property type="match status" value="1"/>
</dbReference>
<protein>
    <recommendedName>
        <fullName evidence="1">Small ribosomal subunit protein uS10</fullName>
    </recommendedName>
    <alternativeName>
        <fullName evidence="2">30S ribosomal protein S10</fullName>
    </alternativeName>
</protein>
<comment type="function">
    <text evidence="1">Involved in the binding of tRNA to the ribosomes.</text>
</comment>
<comment type="subunit">
    <text evidence="1">Part of the 30S ribosomal subunit.</text>
</comment>
<comment type="similarity">
    <text evidence="1">Belongs to the universal ribosomal protein uS10 family.</text>
</comment>
<sequence>MPTKARIRLWSTNVENLNYVITQIRGIVEKTGIEMRGPIPLPTSKLEVPIMRLPHGEGRKKWEKWEMRVHKRLIDIAADERVMRQLMRVRVPEDVYIEIQLI</sequence>
<feature type="chain" id="PRO_1000206602" description="Small ribosomal subunit protein uS10">
    <location>
        <begin position="1"/>
        <end position="102"/>
    </location>
</feature>
<accession>C3NFR5</accession>
<keyword id="KW-0687">Ribonucleoprotein</keyword>
<keyword id="KW-0689">Ribosomal protein</keyword>
<reference key="1">
    <citation type="journal article" date="2009" name="Proc. Natl. Acad. Sci. U.S.A.">
        <title>Biogeography of the Sulfolobus islandicus pan-genome.</title>
        <authorList>
            <person name="Reno M.L."/>
            <person name="Held N.L."/>
            <person name="Fields C.J."/>
            <person name="Burke P.V."/>
            <person name="Whitaker R.J."/>
        </authorList>
    </citation>
    <scope>NUCLEOTIDE SEQUENCE [LARGE SCALE GENOMIC DNA]</scope>
    <source>
        <strain>Y.N.15.51 / Yellowstone #2</strain>
    </source>
</reference>
<name>RS10_SACI1</name>
<evidence type="ECO:0000255" key="1">
    <source>
        <dbReference type="HAMAP-Rule" id="MF_00508"/>
    </source>
</evidence>
<evidence type="ECO:0000305" key="2"/>